<feature type="chain" id="PRO_0000381500" description="Biotin synthase">
    <location>
        <begin position="1"/>
        <end position="338"/>
    </location>
</feature>
<feature type="domain" description="Radical SAM core" evidence="2">
    <location>
        <begin position="63"/>
        <end position="290"/>
    </location>
</feature>
<feature type="binding site" evidence="1">
    <location>
        <position position="78"/>
    </location>
    <ligand>
        <name>[4Fe-4S] cluster</name>
        <dbReference type="ChEBI" id="CHEBI:49883"/>
        <note>4Fe-4S-S-AdoMet</note>
    </ligand>
</feature>
<feature type="binding site" evidence="1">
    <location>
        <position position="82"/>
    </location>
    <ligand>
        <name>[4Fe-4S] cluster</name>
        <dbReference type="ChEBI" id="CHEBI:49883"/>
        <note>4Fe-4S-S-AdoMet</note>
    </ligand>
</feature>
<feature type="binding site" evidence="1">
    <location>
        <position position="85"/>
    </location>
    <ligand>
        <name>[4Fe-4S] cluster</name>
        <dbReference type="ChEBI" id="CHEBI:49883"/>
        <note>4Fe-4S-S-AdoMet</note>
    </ligand>
</feature>
<feature type="binding site" evidence="1">
    <location>
        <position position="122"/>
    </location>
    <ligand>
        <name>[2Fe-2S] cluster</name>
        <dbReference type="ChEBI" id="CHEBI:190135"/>
    </ligand>
</feature>
<feature type="binding site" evidence="1">
    <location>
        <position position="153"/>
    </location>
    <ligand>
        <name>[2Fe-2S] cluster</name>
        <dbReference type="ChEBI" id="CHEBI:190135"/>
    </ligand>
</feature>
<feature type="binding site" evidence="1">
    <location>
        <position position="213"/>
    </location>
    <ligand>
        <name>[2Fe-2S] cluster</name>
        <dbReference type="ChEBI" id="CHEBI:190135"/>
    </ligand>
</feature>
<feature type="binding site" evidence="1">
    <location>
        <position position="285"/>
    </location>
    <ligand>
        <name>[2Fe-2S] cluster</name>
        <dbReference type="ChEBI" id="CHEBI:190135"/>
    </ligand>
</feature>
<gene>
    <name evidence="1" type="primary">bioB</name>
    <name type="ordered locus">Neut_2138</name>
</gene>
<evidence type="ECO:0000255" key="1">
    <source>
        <dbReference type="HAMAP-Rule" id="MF_01694"/>
    </source>
</evidence>
<evidence type="ECO:0000255" key="2">
    <source>
        <dbReference type="PROSITE-ProRule" id="PRU01266"/>
    </source>
</evidence>
<accession>Q0AE72</accession>
<comment type="function">
    <text evidence="1">Catalyzes the conversion of dethiobiotin (DTB) to biotin by the insertion of a sulfur atom into dethiobiotin via a radical-based mechanism.</text>
</comment>
<comment type="catalytic activity">
    <reaction evidence="1">
        <text>(4R,5S)-dethiobiotin + (sulfur carrier)-SH + 2 reduced [2Fe-2S]-[ferredoxin] + 2 S-adenosyl-L-methionine = (sulfur carrier)-H + biotin + 2 5'-deoxyadenosine + 2 L-methionine + 2 oxidized [2Fe-2S]-[ferredoxin]</text>
        <dbReference type="Rhea" id="RHEA:22060"/>
        <dbReference type="Rhea" id="RHEA-COMP:10000"/>
        <dbReference type="Rhea" id="RHEA-COMP:10001"/>
        <dbReference type="Rhea" id="RHEA-COMP:14737"/>
        <dbReference type="Rhea" id="RHEA-COMP:14739"/>
        <dbReference type="ChEBI" id="CHEBI:17319"/>
        <dbReference type="ChEBI" id="CHEBI:29917"/>
        <dbReference type="ChEBI" id="CHEBI:33737"/>
        <dbReference type="ChEBI" id="CHEBI:33738"/>
        <dbReference type="ChEBI" id="CHEBI:57586"/>
        <dbReference type="ChEBI" id="CHEBI:57844"/>
        <dbReference type="ChEBI" id="CHEBI:59789"/>
        <dbReference type="ChEBI" id="CHEBI:64428"/>
        <dbReference type="ChEBI" id="CHEBI:149473"/>
        <dbReference type="EC" id="2.8.1.6"/>
    </reaction>
</comment>
<comment type="cofactor">
    <cofactor evidence="1">
        <name>[4Fe-4S] cluster</name>
        <dbReference type="ChEBI" id="CHEBI:49883"/>
    </cofactor>
    <text evidence="1">Binds 1 [4Fe-4S] cluster. The cluster is coordinated with 3 cysteines and an exchangeable S-adenosyl-L-methionine.</text>
</comment>
<comment type="cofactor">
    <cofactor evidence="1">
        <name>[2Fe-2S] cluster</name>
        <dbReference type="ChEBI" id="CHEBI:190135"/>
    </cofactor>
    <text evidence="1">Binds 1 [2Fe-2S] cluster. The cluster is coordinated with 3 cysteines and 1 arginine.</text>
</comment>
<comment type="pathway">
    <text evidence="1">Cofactor biosynthesis; biotin biosynthesis; biotin from 7,8-diaminononanoate: step 2/2.</text>
</comment>
<comment type="subunit">
    <text evidence="1">Homodimer.</text>
</comment>
<comment type="similarity">
    <text evidence="1">Belongs to the radical SAM superfamily. Biotin synthase family.</text>
</comment>
<protein>
    <recommendedName>
        <fullName evidence="1">Biotin synthase</fullName>
        <ecNumber evidence="1">2.8.1.6</ecNumber>
    </recommendedName>
</protein>
<dbReference type="EC" id="2.8.1.6" evidence="1"/>
<dbReference type="EMBL" id="CP000450">
    <property type="protein sequence ID" value="ABI60360.1"/>
    <property type="molecule type" value="Genomic_DNA"/>
</dbReference>
<dbReference type="RefSeq" id="WP_011635157.1">
    <property type="nucleotide sequence ID" value="NC_008344.1"/>
</dbReference>
<dbReference type="SMR" id="Q0AE72"/>
<dbReference type="STRING" id="335283.Neut_2138"/>
<dbReference type="KEGG" id="net:Neut_2138"/>
<dbReference type="eggNOG" id="COG0502">
    <property type="taxonomic scope" value="Bacteria"/>
</dbReference>
<dbReference type="HOGENOM" id="CLU_033172_1_2_4"/>
<dbReference type="OrthoDB" id="9786826at2"/>
<dbReference type="UniPathway" id="UPA00078">
    <property type="reaction ID" value="UER00162"/>
</dbReference>
<dbReference type="Proteomes" id="UP000001966">
    <property type="component" value="Chromosome"/>
</dbReference>
<dbReference type="GO" id="GO:0051537">
    <property type="term" value="F:2 iron, 2 sulfur cluster binding"/>
    <property type="evidence" value="ECO:0007669"/>
    <property type="project" value="UniProtKB-KW"/>
</dbReference>
<dbReference type="GO" id="GO:0051539">
    <property type="term" value="F:4 iron, 4 sulfur cluster binding"/>
    <property type="evidence" value="ECO:0007669"/>
    <property type="project" value="UniProtKB-KW"/>
</dbReference>
<dbReference type="GO" id="GO:0004076">
    <property type="term" value="F:biotin synthase activity"/>
    <property type="evidence" value="ECO:0007669"/>
    <property type="project" value="UniProtKB-UniRule"/>
</dbReference>
<dbReference type="GO" id="GO:0005506">
    <property type="term" value="F:iron ion binding"/>
    <property type="evidence" value="ECO:0007669"/>
    <property type="project" value="UniProtKB-UniRule"/>
</dbReference>
<dbReference type="GO" id="GO:0009102">
    <property type="term" value="P:biotin biosynthetic process"/>
    <property type="evidence" value="ECO:0007669"/>
    <property type="project" value="UniProtKB-UniRule"/>
</dbReference>
<dbReference type="CDD" id="cd01335">
    <property type="entry name" value="Radical_SAM"/>
    <property type="match status" value="1"/>
</dbReference>
<dbReference type="Gene3D" id="3.20.20.70">
    <property type="entry name" value="Aldolase class I"/>
    <property type="match status" value="1"/>
</dbReference>
<dbReference type="HAMAP" id="MF_01694">
    <property type="entry name" value="BioB"/>
    <property type="match status" value="1"/>
</dbReference>
<dbReference type="InterPro" id="IPR013785">
    <property type="entry name" value="Aldolase_TIM"/>
</dbReference>
<dbReference type="InterPro" id="IPR010722">
    <property type="entry name" value="BATS_dom"/>
</dbReference>
<dbReference type="InterPro" id="IPR002684">
    <property type="entry name" value="Biotin_synth/BioAB"/>
</dbReference>
<dbReference type="InterPro" id="IPR024177">
    <property type="entry name" value="Biotin_synthase"/>
</dbReference>
<dbReference type="InterPro" id="IPR006638">
    <property type="entry name" value="Elp3/MiaA/NifB-like_rSAM"/>
</dbReference>
<dbReference type="InterPro" id="IPR007197">
    <property type="entry name" value="rSAM"/>
</dbReference>
<dbReference type="NCBIfam" id="TIGR00433">
    <property type="entry name" value="bioB"/>
    <property type="match status" value="1"/>
</dbReference>
<dbReference type="PANTHER" id="PTHR22976">
    <property type="entry name" value="BIOTIN SYNTHASE"/>
    <property type="match status" value="1"/>
</dbReference>
<dbReference type="PANTHER" id="PTHR22976:SF2">
    <property type="entry name" value="BIOTIN SYNTHASE, MITOCHONDRIAL"/>
    <property type="match status" value="1"/>
</dbReference>
<dbReference type="Pfam" id="PF06968">
    <property type="entry name" value="BATS"/>
    <property type="match status" value="1"/>
</dbReference>
<dbReference type="Pfam" id="PF04055">
    <property type="entry name" value="Radical_SAM"/>
    <property type="match status" value="1"/>
</dbReference>
<dbReference type="PIRSF" id="PIRSF001619">
    <property type="entry name" value="Biotin_synth"/>
    <property type="match status" value="1"/>
</dbReference>
<dbReference type="SFLD" id="SFLDF00272">
    <property type="entry name" value="biotin_synthase"/>
    <property type="match status" value="1"/>
</dbReference>
<dbReference type="SFLD" id="SFLDS00029">
    <property type="entry name" value="Radical_SAM"/>
    <property type="match status" value="1"/>
</dbReference>
<dbReference type="SMART" id="SM00876">
    <property type="entry name" value="BATS"/>
    <property type="match status" value="1"/>
</dbReference>
<dbReference type="SMART" id="SM00729">
    <property type="entry name" value="Elp3"/>
    <property type="match status" value="1"/>
</dbReference>
<dbReference type="SUPFAM" id="SSF102114">
    <property type="entry name" value="Radical SAM enzymes"/>
    <property type="match status" value="1"/>
</dbReference>
<dbReference type="PROSITE" id="PS51918">
    <property type="entry name" value="RADICAL_SAM"/>
    <property type="match status" value="1"/>
</dbReference>
<proteinExistence type="inferred from homology"/>
<name>BIOB_NITEC</name>
<sequence length="338" mass="36855">MESRTDLISEKQCGCTYSNPDLAVQQESSSRWLVADVESLLGLPFNDLIFQAQTVHRQYHDANGVQLSTLLSVKTGGCSEDCAYCPQAARYHTGVENQAILSREEVVMAATKAKESGATRFCMGAAWRGPKQRDIEHMTELISAVKDLGLETCATLGILKPGQAVQLKQAGLDYYNHNLDTSPEFYGEVITTREYQNRLDTLDEVRGANINVCCGGIVGMGESRTARAGLIAQLASLDPYPESVPINYLVQVEGTPLYGIPELDPFEFVRSIAAARITMPRAKVRLSAGRRQMSEAIQALCFLAGANSIFYGDKLLTTGNPDTEQDAALLEKLGLHAL</sequence>
<keyword id="KW-0001">2Fe-2S</keyword>
<keyword id="KW-0004">4Fe-4S</keyword>
<keyword id="KW-0093">Biotin biosynthesis</keyword>
<keyword id="KW-0408">Iron</keyword>
<keyword id="KW-0411">Iron-sulfur</keyword>
<keyword id="KW-0479">Metal-binding</keyword>
<keyword id="KW-0949">S-adenosyl-L-methionine</keyword>
<keyword id="KW-0808">Transferase</keyword>
<organism>
    <name type="scientific">Nitrosomonas eutropha (strain DSM 101675 / C91 / Nm57)</name>
    <dbReference type="NCBI Taxonomy" id="335283"/>
    <lineage>
        <taxon>Bacteria</taxon>
        <taxon>Pseudomonadati</taxon>
        <taxon>Pseudomonadota</taxon>
        <taxon>Betaproteobacteria</taxon>
        <taxon>Nitrosomonadales</taxon>
        <taxon>Nitrosomonadaceae</taxon>
        <taxon>Nitrosomonas</taxon>
    </lineage>
</organism>
<reference key="1">
    <citation type="journal article" date="2007" name="Environ. Microbiol.">
        <title>Whole-genome analysis of the ammonia-oxidizing bacterium, Nitrosomonas eutropha C91: implications for niche adaptation.</title>
        <authorList>
            <person name="Stein L.Y."/>
            <person name="Arp D.J."/>
            <person name="Berube P.M."/>
            <person name="Chain P.S."/>
            <person name="Hauser L."/>
            <person name="Jetten M.S."/>
            <person name="Klotz M.G."/>
            <person name="Larimer F.W."/>
            <person name="Norton J.M."/>
            <person name="Op den Camp H.J.M."/>
            <person name="Shin M."/>
            <person name="Wei X."/>
        </authorList>
    </citation>
    <scope>NUCLEOTIDE SEQUENCE [LARGE SCALE GENOMIC DNA]</scope>
    <source>
        <strain>DSM 101675 / C91 / Nm57</strain>
    </source>
</reference>